<reference key="1">
    <citation type="journal article" date="2006" name="Lancet">
        <title>Complete genome sequence of USA300, an epidemic clone of community-acquired meticillin-resistant Staphylococcus aureus.</title>
        <authorList>
            <person name="Diep B.A."/>
            <person name="Gill S.R."/>
            <person name="Chang R.F."/>
            <person name="Phan T.H."/>
            <person name="Chen J.H."/>
            <person name="Davidson M.G."/>
            <person name="Lin F."/>
            <person name="Lin J."/>
            <person name="Carleton H.A."/>
            <person name="Mongodin E.F."/>
            <person name="Sensabaugh G.F."/>
            <person name="Perdreau-Remington F."/>
        </authorList>
    </citation>
    <scope>NUCLEOTIDE SEQUENCE [LARGE SCALE GENOMIC DNA]</scope>
    <source>
        <strain>USA300</strain>
    </source>
</reference>
<accession>Q2FGE4</accession>
<evidence type="ECO:0000255" key="1">
    <source>
        <dbReference type="HAMAP-Rule" id="MF_01152"/>
    </source>
</evidence>
<organism>
    <name type="scientific">Staphylococcus aureus (strain USA300)</name>
    <dbReference type="NCBI Taxonomy" id="367830"/>
    <lineage>
        <taxon>Bacteria</taxon>
        <taxon>Bacillati</taxon>
        <taxon>Bacillota</taxon>
        <taxon>Bacilli</taxon>
        <taxon>Bacillales</taxon>
        <taxon>Staphylococcaceae</taxon>
        <taxon>Staphylococcus</taxon>
    </lineage>
</organism>
<keyword id="KW-0143">Chaperone</keyword>
<keyword id="KW-0963">Cytoplasm</keyword>
<keyword id="KW-0235">DNA replication</keyword>
<keyword id="KW-0479">Metal-binding</keyword>
<keyword id="KW-0677">Repeat</keyword>
<keyword id="KW-0346">Stress response</keyword>
<keyword id="KW-0862">Zinc</keyword>
<keyword id="KW-0863">Zinc-finger</keyword>
<name>DNAJ_STAA3</name>
<protein>
    <recommendedName>
        <fullName evidence="1">Chaperone protein DnaJ</fullName>
    </recommendedName>
</protein>
<gene>
    <name evidence="1" type="primary">dnaJ</name>
    <name type="ordered locus">SAUSA300_1539</name>
</gene>
<dbReference type="EMBL" id="CP000255">
    <property type="protein sequence ID" value="ABD22653.1"/>
    <property type="molecule type" value="Genomic_DNA"/>
</dbReference>
<dbReference type="RefSeq" id="WP_001119021.1">
    <property type="nucleotide sequence ID" value="NZ_CP027476.1"/>
</dbReference>
<dbReference type="SMR" id="Q2FGE4"/>
<dbReference type="KEGG" id="saa:SAUSA300_1539"/>
<dbReference type="HOGENOM" id="CLU_017633_0_7_9"/>
<dbReference type="OMA" id="MATDYYA"/>
<dbReference type="Proteomes" id="UP000001939">
    <property type="component" value="Chromosome"/>
</dbReference>
<dbReference type="GO" id="GO:0005737">
    <property type="term" value="C:cytoplasm"/>
    <property type="evidence" value="ECO:0007669"/>
    <property type="project" value="UniProtKB-SubCell"/>
</dbReference>
<dbReference type="GO" id="GO:0005524">
    <property type="term" value="F:ATP binding"/>
    <property type="evidence" value="ECO:0007669"/>
    <property type="project" value="InterPro"/>
</dbReference>
<dbReference type="GO" id="GO:0031072">
    <property type="term" value="F:heat shock protein binding"/>
    <property type="evidence" value="ECO:0007669"/>
    <property type="project" value="InterPro"/>
</dbReference>
<dbReference type="GO" id="GO:0051082">
    <property type="term" value="F:unfolded protein binding"/>
    <property type="evidence" value="ECO:0007669"/>
    <property type="project" value="UniProtKB-UniRule"/>
</dbReference>
<dbReference type="GO" id="GO:0008270">
    <property type="term" value="F:zinc ion binding"/>
    <property type="evidence" value="ECO:0007669"/>
    <property type="project" value="UniProtKB-UniRule"/>
</dbReference>
<dbReference type="GO" id="GO:0051085">
    <property type="term" value="P:chaperone cofactor-dependent protein refolding"/>
    <property type="evidence" value="ECO:0007669"/>
    <property type="project" value="TreeGrafter"/>
</dbReference>
<dbReference type="GO" id="GO:0006260">
    <property type="term" value="P:DNA replication"/>
    <property type="evidence" value="ECO:0007669"/>
    <property type="project" value="UniProtKB-KW"/>
</dbReference>
<dbReference type="GO" id="GO:0042026">
    <property type="term" value="P:protein refolding"/>
    <property type="evidence" value="ECO:0007669"/>
    <property type="project" value="TreeGrafter"/>
</dbReference>
<dbReference type="GO" id="GO:0009408">
    <property type="term" value="P:response to heat"/>
    <property type="evidence" value="ECO:0007669"/>
    <property type="project" value="InterPro"/>
</dbReference>
<dbReference type="CDD" id="cd06257">
    <property type="entry name" value="DnaJ"/>
    <property type="match status" value="1"/>
</dbReference>
<dbReference type="CDD" id="cd10747">
    <property type="entry name" value="DnaJ_C"/>
    <property type="match status" value="1"/>
</dbReference>
<dbReference type="CDD" id="cd10719">
    <property type="entry name" value="DnaJ_zf"/>
    <property type="match status" value="1"/>
</dbReference>
<dbReference type="FunFam" id="1.10.287.110:FF:000031">
    <property type="entry name" value="Molecular chaperone DnaJ"/>
    <property type="match status" value="1"/>
</dbReference>
<dbReference type="FunFam" id="2.10.230.10:FF:000002">
    <property type="entry name" value="Molecular chaperone DnaJ"/>
    <property type="match status" value="1"/>
</dbReference>
<dbReference type="FunFam" id="2.60.260.20:FF:000004">
    <property type="entry name" value="Molecular chaperone DnaJ"/>
    <property type="match status" value="1"/>
</dbReference>
<dbReference type="Gene3D" id="1.10.287.110">
    <property type="entry name" value="DnaJ domain"/>
    <property type="match status" value="1"/>
</dbReference>
<dbReference type="Gene3D" id="2.10.230.10">
    <property type="entry name" value="Heat shock protein DnaJ, cysteine-rich domain"/>
    <property type="match status" value="1"/>
</dbReference>
<dbReference type="Gene3D" id="2.60.260.20">
    <property type="entry name" value="Urease metallochaperone UreE, N-terminal domain"/>
    <property type="match status" value="2"/>
</dbReference>
<dbReference type="HAMAP" id="MF_01152">
    <property type="entry name" value="DnaJ"/>
    <property type="match status" value="1"/>
</dbReference>
<dbReference type="InterPro" id="IPR012724">
    <property type="entry name" value="DnaJ"/>
</dbReference>
<dbReference type="InterPro" id="IPR002939">
    <property type="entry name" value="DnaJ_C"/>
</dbReference>
<dbReference type="InterPro" id="IPR001623">
    <property type="entry name" value="DnaJ_domain"/>
</dbReference>
<dbReference type="InterPro" id="IPR018253">
    <property type="entry name" value="DnaJ_domain_CS"/>
</dbReference>
<dbReference type="InterPro" id="IPR008971">
    <property type="entry name" value="HSP40/DnaJ_pept-bd"/>
</dbReference>
<dbReference type="InterPro" id="IPR001305">
    <property type="entry name" value="HSP_DnaJ_Cys-rich_dom"/>
</dbReference>
<dbReference type="InterPro" id="IPR036410">
    <property type="entry name" value="HSP_DnaJ_Cys-rich_dom_sf"/>
</dbReference>
<dbReference type="InterPro" id="IPR036869">
    <property type="entry name" value="J_dom_sf"/>
</dbReference>
<dbReference type="NCBIfam" id="TIGR02349">
    <property type="entry name" value="DnaJ_bact"/>
    <property type="match status" value="1"/>
</dbReference>
<dbReference type="NCBIfam" id="NF008035">
    <property type="entry name" value="PRK10767.1"/>
    <property type="match status" value="1"/>
</dbReference>
<dbReference type="NCBIfam" id="NF010873">
    <property type="entry name" value="PRK14280.1"/>
    <property type="match status" value="1"/>
</dbReference>
<dbReference type="PANTHER" id="PTHR43096:SF48">
    <property type="entry name" value="CHAPERONE PROTEIN DNAJ"/>
    <property type="match status" value="1"/>
</dbReference>
<dbReference type="PANTHER" id="PTHR43096">
    <property type="entry name" value="DNAJ HOMOLOG 1, MITOCHONDRIAL-RELATED"/>
    <property type="match status" value="1"/>
</dbReference>
<dbReference type="Pfam" id="PF00226">
    <property type="entry name" value="DnaJ"/>
    <property type="match status" value="1"/>
</dbReference>
<dbReference type="Pfam" id="PF01556">
    <property type="entry name" value="DnaJ_C"/>
    <property type="match status" value="1"/>
</dbReference>
<dbReference type="Pfam" id="PF00684">
    <property type="entry name" value="DnaJ_CXXCXGXG"/>
    <property type="match status" value="1"/>
</dbReference>
<dbReference type="PRINTS" id="PR00625">
    <property type="entry name" value="JDOMAIN"/>
</dbReference>
<dbReference type="SMART" id="SM00271">
    <property type="entry name" value="DnaJ"/>
    <property type="match status" value="1"/>
</dbReference>
<dbReference type="SUPFAM" id="SSF46565">
    <property type="entry name" value="Chaperone J-domain"/>
    <property type="match status" value="1"/>
</dbReference>
<dbReference type="SUPFAM" id="SSF57938">
    <property type="entry name" value="DnaJ/Hsp40 cysteine-rich domain"/>
    <property type="match status" value="1"/>
</dbReference>
<dbReference type="SUPFAM" id="SSF49493">
    <property type="entry name" value="HSP40/DnaJ peptide-binding domain"/>
    <property type="match status" value="2"/>
</dbReference>
<dbReference type="PROSITE" id="PS00636">
    <property type="entry name" value="DNAJ_1"/>
    <property type="match status" value="1"/>
</dbReference>
<dbReference type="PROSITE" id="PS50076">
    <property type="entry name" value="DNAJ_2"/>
    <property type="match status" value="1"/>
</dbReference>
<dbReference type="PROSITE" id="PS51188">
    <property type="entry name" value="ZF_CR"/>
    <property type="match status" value="1"/>
</dbReference>
<proteinExistence type="inferred from homology"/>
<comment type="function">
    <text evidence="1">Participates actively in the response to hyperosmotic and heat shock by preventing the aggregation of stress-denatured proteins and by disaggregating proteins, also in an autonomous, DnaK-independent fashion. Unfolded proteins bind initially to DnaJ; upon interaction with the DnaJ-bound protein, DnaK hydrolyzes its bound ATP, resulting in the formation of a stable complex. GrpE releases ADP from DnaK; ATP binding to DnaK triggers the release of the substrate protein, thus completing the reaction cycle. Several rounds of ATP-dependent interactions between DnaJ, DnaK and GrpE are required for fully efficient folding. Also involved, together with DnaK and GrpE, in the DNA replication of plasmids through activation of initiation proteins.</text>
</comment>
<comment type="cofactor">
    <cofactor evidence="1">
        <name>Zn(2+)</name>
        <dbReference type="ChEBI" id="CHEBI:29105"/>
    </cofactor>
    <text evidence="1">Binds 2 Zn(2+) ions per monomer.</text>
</comment>
<comment type="subunit">
    <text evidence="1">Homodimer.</text>
</comment>
<comment type="subcellular location">
    <subcellularLocation>
        <location evidence="1">Cytoplasm</location>
    </subcellularLocation>
</comment>
<comment type="domain">
    <text evidence="1">The J domain is necessary and sufficient to stimulate DnaK ATPase activity. Zinc center 1 plays an important role in the autonomous, DnaK-independent chaperone activity of DnaJ. Zinc center 2 is essential for interaction with DnaK and for DnaJ activity.</text>
</comment>
<comment type="similarity">
    <text evidence="1">Belongs to the DnaJ family.</text>
</comment>
<feature type="chain" id="PRO_1000085310" description="Chaperone protein DnaJ">
    <location>
        <begin position="1"/>
        <end position="379"/>
    </location>
</feature>
<feature type="domain" description="J" evidence="1">
    <location>
        <begin position="5"/>
        <end position="69"/>
    </location>
</feature>
<feature type="repeat" description="CXXCXGXG motif">
    <location>
        <begin position="149"/>
        <end position="156"/>
    </location>
</feature>
<feature type="repeat" description="CXXCXGXG motif">
    <location>
        <begin position="166"/>
        <end position="173"/>
    </location>
</feature>
<feature type="repeat" description="CXXCXGXG motif">
    <location>
        <begin position="192"/>
        <end position="199"/>
    </location>
</feature>
<feature type="repeat" description="CXXCXGXG motif">
    <location>
        <begin position="206"/>
        <end position="213"/>
    </location>
</feature>
<feature type="zinc finger region" description="CR-type" evidence="1">
    <location>
        <begin position="136"/>
        <end position="218"/>
    </location>
</feature>
<feature type="binding site" evidence="1">
    <location>
        <position position="149"/>
    </location>
    <ligand>
        <name>Zn(2+)</name>
        <dbReference type="ChEBI" id="CHEBI:29105"/>
        <label>1</label>
    </ligand>
</feature>
<feature type="binding site" evidence="1">
    <location>
        <position position="152"/>
    </location>
    <ligand>
        <name>Zn(2+)</name>
        <dbReference type="ChEBI" id="CHEBI:29105"/>
        <label>1</label>
    </ligand>
</feature>
<feature type="binding site" evidence="1">
    <location>
        <position position="166"/>
    </location>
    <ligand>
        <name>Zn(2+)</name>
        <dbReference type="ChEBI" id="CHEBI:29105"/>
        <label>2</label>
    </ligand>
</feature>
<feature type="binding site" evidence="1">
    <location>
        <position position="169"/>
    </location>
    <ligand>
        <name>Zn(2+)</name>
        <dbReference type="ChEBI" id="CHEBI:29105"/>
        <label>2</label>
    </ligand>
</feature>
<feature type="binding site" evidence="1">
    <location>
        <position position="192"/>
    </location>
    <ligand>
        <name>Zn(2+)</name>
        <dbReference type="ChEBI" id="CHEBI:29105"/>
        <label>2</label>
    </ligand>
</feature>
<feature type="binding site" evidence="1">
    <location>
        <position position="195"/>
    </location>
    <ligand>
        <name>Zn(2+)</name>
        <dbReference type="ChEBI" id="CHEBI:29105"/>
        <label>2</label>
    </ligand>
</feature>
<feature type="binding site" evidence="1">
    <location>
        <position position="206"/>
    </location>
    <ligand>
        <name>Zn(2+)</name>
        <dbReference type="ChEBI" id="CHEBI:29105"/>
        <label>1</label>
    </ligand>
</feature>
<feature type="binding site" evidence="1">
    <location>
        <position position="209"/>
    </location>
    <ligand>
        <name>Zn(2+)</name>
        <dbReference type="ChEBI" id="CHEBI:29105"/>
        <label>1</label>
    </ligand>
</feature>
<sequence length="379" mass="41761">MAKRDYYEVLGISKDASKDEIKKAYRKLSKKYHPDINKEEGADEKFKEISEAYEVLSDDNKRASYDQFGHDGPQGFGGQGFNGSDFGGFSGFGGGGFEDIFSSFFGGGRQRDPNAPQKGDDLQYTMTLTFEEAVFGTTKEISIRKDVTCETCHGDGAKPGTSKKTCSYCNGAGHVAVEQNTILGRVRTEQVCPKCNGSGQEFEEACPTCHGKGTENKTVKLEVKVPEGVDNEQQIRLAGEGSPGVNGGPAGDLYVVFRVKPSETFKRDGDDIYYKLNVSFPQAALGDEIKIPTLNNEVMLTIPAGTQTGKQFRLKEKGIKNVHGYGYGDLYVDIKVVTPTKLTDRQKELMKEFAQLNGEEINEQPSNFKDRAKRFFKGE</sequence>